<proteinExistence type="inferred from homology"/>
<accession>P32934</accession>
<feature type="chain" id="PRO_0000222725" description="Helicase VP6-A">
    <location>
        <begin position="1"/>
        <end position="325"/>
    </location>
</feature>
<feature type="region of interest" description="Disordered" evidence="2">
    <location>
        <begin position="1"/>
        <end position="127"/>
    </location>
</feature>
<feature type="region of interest" description="Disordered" evidence="2">
    <location>
        <begin position="174"/>
        <end position="230"/>
    </location>
</feature>
<feature type="compositionally biased region" description="Basic and acidic residues" evidence="2">
    <location>
        <begin position="8"/>
        <end position="18"/>
    </location>
</feature>
<feature type="compositionally biased region" description="Basic and acidic residues" evidence="2">
    <location>
        <begin position="32"/>
        <end position="54"/>
    </location>
</feature>
<feature type="compositionally biased region" description="Basic and acidic residues" evidence="2">
    <location>
        <begin position="61"/>
        <end position="79"/>
    </location>
</feature>
<feature type="compositionally biased region" description="Basic and acidic residues" evidence="2">
    <location>
        <begin position="92"/>
        <end position="105"/>
    </location>
</feature>
<feature type="compositionally biased region" description="Gly residues" evidence="2">
    <location>
        <begin position="106"/>
        <end position="122"/>
    </location>
</feature>
<feature type="compositionally biased region" description="Basic and acidic residues" evidence="2">
    <location>
        <begin position="175"/>
        <end position="229"/>
    </location>
</feature>
<feature type="binding site" evidence="1">
    <location>
        <position position="106"/>
    </location>
    <ligand>
        <name>ATP</name>
        <dbReference type="ChEBI" id="CHEBI:30616"/>
    </ligand>
</feature>
<organism>
    <name type="scientific">Bluetongue virus 13 (isolate USA)</name>
    <name type="common">BTV 13</name>
    <dbReference type="NCBI Taxonomy" id="33717"/>
    <lineage>
        <taxon>Viruses</taxon>
        <taxon>Riboviria</taxon>
        <taxon>Orthornavirae</taxon>
        <taxon>Duplornaviricota</taxon>
        <taxon>Resentoviricetes</taxon>
        <taxon>Reovirales</taxon>
        <taxon>Sedoreoviridae</taxon>
        <taxon>Orbivirus</taxon>
        <taxon>Bluetongue virus</taxon>
    </lineage>
</organism>
<keyword id="KW-0067">ATP-binding</keyword>
<keyword id="KW-0167">Capsid protein</keyword>
<keyword id="KW-0378">Hydrolase</keyword>
<keyword id="KW-1153">Inner capsid protein</keyword>
<keyword id="KW-0547">Nucleotide-binding</keyword>
<keyword id="KW-0946">Virion</keyword>
<protein>
    <recommendedName>
        <fullName>Helicase VP6-A</fullName>
        <ecNumber evidence="1">3.6.4.13</ecNumber>
    </recommendedName>
    <alternativeName>
        <fullName>Minor inner core protein VP6</fullName>
    </alternativeName>
</protein>
<organismHost>
    <name type="scientific">Antilocapra americana</name>
    <name type="common">Pronghorn</name>
    <dbReference type="NCBI Taxonomy" id="9891"/>
</organismHost>
<organismHost>
    <name type="scientific">Bos taurus</name>
    <name type="common">Bovine</name>
    <dbReference type="NCBI Taxonomy" id="9913"/>
</organismHost>
<organismHost>
    <name type="scientific">Capra hircus</name>
    <name type="common">Goat</name>
    <dbReference type="NCBI Taxonomy" id="9925"/>
</organismHost>
<organismHost>
    <name type="scientific">Culicoides variipennis</name>
    <name type="common">Biting midge</name>
    <dbReference type="NCBI Taxonomy" id="46212"/>
</organismHost>
<organismHost>
    <name type="scientific">Ovis aries</name>
    <name type="common">Sheep</name>
    <dbReference type="NCBI Taxonomy" id="9940"/>
</organismHost>
<comment type="function">
    <text evidence="1">ATP dependent RNA helicase essential for RNA packaging and viral transcription. Possesses ss- and dsRNA-binding capacity.</text>
</comment>
<comment type="catalytic activity">
    <reaction evidence="1">
        <text>ATP + H2O = ADP + phosphate + H(+)</text>
        <dbReference type="Rhea" id="RHEA:13065"/>
        <dbReference type="ChEBI" id="CHEBI:15377"/>
        <dbReference type="ChEBI" id="CHEBI:15378"/>
        <dbReference type="ChEBI" id="CHEBI:30616"/>
        <dbReference type="ChEBI" id="CHEBI:43474"/>
        <dbReference type="ChEBI" id="CHEBI:456216"/>
        <dbReference type="EC" id="3.6.4.13"/>
    </reaction>
</comment>
<comment type="subunit">
    <text evidence="1">Homohexamer.</text>
</comment>
<comment type="subcellular location">
    <subcellularLocation>
        <location>Virion</location>
    </subcellularLocation>
    <text>Inner capsid.</text>
</comment>
<comment type="similarity">
    <text evidence="3">Belongs to the orbivirus VP6 family.</text>
</comment>
<dbReference type="EC" id="3.6.4.13" evidence="1"/>
<dbReference type="EMBL" id="L08671">
    <property type="protein sequence ID" value="AAA42820.1"/>
    <property type="molecule type" value="Genomic_RNA"/>
</dbReference>
<dbReference type="SMR" id="P32934"/>
<dbReference type="GO" id="GO:0039625">
    <property type="term" value="C:viral inner capsid"/>
    <property type="evidence" value="ECO:0007669"/>
    <property type="project" value="UniProtKB-KW"/>
</dbReference>
<dbReference type="GO" id="GO:0005524">
    <property type="term" value="F:ATP binding"/>
    <property type="evidence" value="ECO:0007669"/>
    <property type="project" value="UniProtKB-KW"/>
</dbReference>
<dbReference type="GO" id="GO:0016787">
    <property type="term" value="F:hydrolase activity"/>
    <property type="evidence" value="ECO:0007669"/>
    <property type="project" value="UniProtKB-KW"/>
</dbReference>
<dbReference type="GO" id="GO:0005198">
    <property type="term" value="F:structural molecule activity"/>
    <property type="evidence" value="ECO:0007669"/>
    <property type="project" value="InterPro"/>
</dbReference>
<dbReference type="InterPro" id="IPR001399">
    <property type="entry name" value="Orbi_VP6"/>
</dbReference>
<dbReference type="Pfam" id="PF01516">
    <property type="entry name" value="Orbi_VP6"/>
    <property type="match status" value="1"/>
</dbReference>
<dbReference type="PRINTS" id="PR00902">
    <property type="entry name" value="VP6CAPSID"/>
</dbReference>
<reference key="1">
    <citation type="journal article" date="1992" name="Virus Res.">
        <title>Comparative sequence analyses of the cognate structural protein VP6 genes of five US bluetongue viruses.</title>
        <authorList>
            <person name="Hwang G.-Y."/>
            <person name="Chiou J.-F."/>
            <person name="Yang Y.-Y."/>
            <person name="Li J.K.-K."/>
        </authorList>
    </citation>
    <scope>NUCLEOTIDE SEQUENCE [GENOMIC RNA]</scope>
</reference>
<gene>
    <name type="primary">Segment-9</name>
</gene>
<name>VP6_BTV13</name>
<sequence length="325" mass="35245">MLLAPGDVIKRSSEELKQRQIQINLVDWTESEGGKENKTEPKEESKAEGSKDGEGTQSESGQKEEGGKETKDADVDRRIHTAVGSGSSTKGPGERANENADRGDGKVGGGGGDADAGVGATGTNGRRWVVLTEEIARAIESKYGTKIDVYRDEVPAQIIEVERSLQKELGISREGVAEQTERSRDLRRKEKNGTHAKAVERGGRKQRKESHGDAQREGVEEEKTSEEPARIGITIEGVMSQNKLLSMIGGVERKMAPIGARESAVMLVSNSIKDVVRATAYFTAPTGDPHWKEVAREASKKKNILAYTSTGGDAKTEFLHLIDHL</sequence>
<evidence type="ECO:0000250" key="1">
    <source>
        <dbReference type="UniProtKB" id="Q98829"/>
    </source>
</evidence>
<evidence type="ECO:0000256" key="2">
    <source>
        <dbReference type="SAM" id="MobiDB-lite"/>
    </source>
</evidence>
<evidence type="ECO:0000305" key="3"/>